<dbReference type="EMBL" id="DS027686">
    <property type="protein sequence ID" value="EAW24269.1"/>
    <property type="molecule type" value="Genomic_DNA"/>
</dbReference>
<dbReference type="RefSeq" id="XP_001266166.1">
    <property type="nucleotide sequence ID" value="XM_001266165.1"/>
</dbReference>
<dbReference type="SMR" id="A1CZU9"/>
<dbReference type="STRING" id="331117.A1CZU9"/>
<dbReference type="EnsemblFungi" id="EAW24269">
    <property type="protein sequence ID" value="EAW24269"/>
    <property type="gene ID" value="NFIA_038430"/>
</dbReference>
<dbReference type="GeneID" id="4592562"/>
<dbReference type="KEGG" id="nfi:NFIA_038430"/>
<dbReference type="VEuPathDB" id="FungiDB:NFIA_038430"/>
<dbReference type="eggNOG" id="KOG1471">
    <property type="taxonomic scope" value="Eukaryota"/>
</dbReference>
<dbReference type="HOGENOM" id="CLU_045138_1_0_1"/>
<dbReference type="OMA" id="MVQIHDY"/>
<dbReference type="OrthoDB" id="75724at2759"/>
<dbReference type="Proteomes" id="UP000006702">
    <property type="component" value="Unassembled WGS sequence"/>
</dbReference>
<dbReference type="GO" id="GO:0032541">
    <property type="term" value="C:cortical endoplasmic reticulum"/>
    <property type="evidence" value="ECO:0007669"/>
    <property type="project" value="TreeGrafter"/>
</dbReference>
<dbReference type="GO" id="GO:0005829">
    <property type="term" value="C:cytosol"/>
    <property type="evidence" value="ECO:0007669"/>
    <property type="project" value="TreeGrafter"/>
</dbReference>
<dbReference type="GO" id="GO:0005789">
    <property type="term" value="C:endoplasmic reticulum membrane"/>
    <property type="evidence" value="ECO:0007669"/>
    <property type="project" value="UniProtKB-SubCell"/>
</dbReference>
<dbReference type="GO" id="GO:0005886">
    <property type="term" value="C:plasma membrane"/>
    <property type="evidence" value="ECO:0007669"/>
    <property type="project" value="TreeGrafter"/>
</dbReference>
<dbReference type="GO" id="GO:0046872">
    <property type="term" value="F:metal ion binding"/>
    <property type="evidence" value="ECO:0007669"/>
    <property type="project" value="UniProtKB-KW"/>
</dbReference>
<dbReference type="GO" id="GO:0008526">
    <property type="term" value="F:phosphatidylinositol transfer activity"/>
    <property type="evidence" value="ECO:0007669"/>
    <property type="project" value="InterPro"/>
</dbReference>
<dbReference type="GO" id="GO:0043001">
    <property type="term" value="P:Golgi to plasma membrane protein transport"/>
    <property type="evidence" value="ECO:0007669"/>
    <property type="project" value="TreeGrafter"/>
</dbReference>
<dbReference type="GO" id="GO:0017157">
    <property type="term" value="P:regulation of exocytosis"/>
    <property type="evidence" value="ECO:0007669"/>
    <property type="project" value="TreeGrafter"/>
</dbReference>
<dbReference type="CDD" id="cd00170">
    <property type="entry name" value="SEC14"/>
    <property type="match status" value="1"/>
</dbReference>
<dbReference type="FunFam" id="3.40.525.10:FF:000017">
    <property type="entry name" value="Phosphatidylinositol transfer protein sfh5"/>
    <property type="match status" value="1"/>
</dbReference>
<dbReference type="Gene3D" id="3.40.525.10">
    <property type="entry name" value="CRAL-TRIO lipid binding domain"/>
    <property type="match status" value="1"/>
</dbReference>
<dbReference type="InterPro" id="IPR001251">
    <property type="entry name" value="CRAL-TRIO_dom"/>
</dbReference>
<dbReference type="InterPro" id="IPR036865">
    <property type="entry name" value="CRAL-TRIO_dom_sf"/>
</dbReference>
<dbReference type="InterPro" id="IPR011074">
    <property type="entry name" value="CRAL/TRIO_N_dom"/>
</dbReference>
<dbReference type="InterPro" id="IPR036273">
    <property type="entry name" value="CRAL/TRIO_N_dom_sf"/>
</dbReference>
<dbReference type="InterPro" id="IPR042938">
    <property type="entry name" value="Sfh5"/>
</dbReference>
<dbReference type="PANTHER" id="PTHR47669">
    <property type="entry name" value="PHOSPHATIDYLINOSITOL TRANSFER PROTEIN SFH5"/>
    <property type="match status" value="1"/>
</dbReference>
<dbReference type="PANTHER" id="PTHR47669:SF1">
    <property type="entry name" value="PHOSPHATIDYLINOSITOL TRANSFER PROTEIN SFH5"/>
    <property type="match status" value="1"/>
</dbReference>
<dbReference type="Pfam" id="PF00650">
    <property type="entry name" value="CRAL_TRIO"/>
    <property type="match status" value="1"/>
</dbReference>
<dbReference type="Pfam" id="PF03765">
    <property type="entry name" value="CRAL_TRIO_N"/>
    <property type="match status" value="1"/>
</dbReference>
<dbReference type="SMART" id="SM00516">
    <property type="entry name" value="SEC14"/>
    <property type="match status" value="1"/>
</dbReference>
<dbReference type="SUPFAM" id="SSF52087">
    <property type="entry name" value="CRAL/TRIO domain"/>
    <property type="match status" value="1"/>
</dbReference>
<dbReference type="SUPFAM" id="SSF46938">
    <property type="entry name" value="CRAL/TRIO N-terminal domain"/>
    <property type="match status" value="1"/>
</dbReference>
<dbReference type="PROSITE" id="PS50191">
    <property type="entry name" value="CRAL_TRIO"/>
    <property type="match status" value="1"/>
</dbReference>
<organism>
    <name type="scientific">Neosartorya fischeri (strain ATCC 1020 / DSM 3700 / CBS 544.65 / FGSC A1164 / JCM 1740 / NRRL 181 / WB 181)</name>
    <name type="common">Aspergillus fischerianus</name>
    <dbReference type="NCBI Taxonomy" id="331117"/>
    <lineage>
        <taxon>Eukaryota</taxon>
        <taxon>Fungi</taxon>
        <taxon>Dikarya</taxon>
        <taxon>Ascomycota</taxon>
        <taxon>Pezizomycotina</taxon>
        <taxon>Eurotiomycetes</taxon>
        <taxon>Eurotiomycetidae</taxon>
        <taxon>Eurotiales</taxon>
        <taxon>Aspergillaceae</taxon>
        <taxon>Aspergillus</taxon>
        <taxon>Aspergillus subgen. Fumigati</taxon>
    </lineage>
</organism>
<protein>
    <recommendedName>
        <fullName>Phosphatidylinositol transfer protein sfh5</fullName>
        <shortName>PITP sfh5</shortName>
    </recommendedName>
</protein>
<gene>
    <name type="primary">sfh5</name>
    <name type="ORF">NFIA_038430</name>
</gene>
<evidence type="ECO:0000250" key="1">
    <source>
        <dbReference type="UniProtKB" id="A6ZQI5"/>
    </source>
</evidence>
<evidence type="ECO:0000250" key="2">
    <source>
        <dbReference type="UniProtKB" id="P47008"/>
    </source>
</evidence>
<evidence type="ECO:0000255" key="3">
    <source>
        <dbReference type="PROSITE-ProRule" id="PRU00056"/>
    </source>
</evidence>
<evidence type="ECO:0000256" key="4">
    <source>
        <dbReference type="SAM" id="MobiDB-lite"/>
    </source>
</evidence>
<evidence type="ECO:0000305" key="5"/>
<accession>A1CZU9</accession>
<keyword id="KW-0963">Cytoplasm</keyword>
<keyword id="KW-0256">Endoplasmic reticulum</keyword>
<keyword id="KW-0349">Heme</keyword>
<keyword id="KW-0408">Iron</keyword>
<keyword id="KW-0445">Lipid transport</keyword>
<keyword id="KW-0472">Membrane</keyword>
<keyword id="KW-0479">Metal-binding</keyword>
<keyword id="KW-0492">Microsome</keyword>
<keyword id="KW-1185">Reference proteome</keyword>
<keyword id="KW-0813">Transport</keyword>
<proteinExistence type="inferred from homology"/>
<sequence length="415" mass="45277">MADQQPEKTTAPATDVADSQPAVVTSTDTRKETTETAEPLPEDKTETTTAQPAVETTATQSGTAETPAEVQQPPQAEEEKPVAQQPEQPAYLAKNPALAQFFERLPAIVSSSGHAEMWGVPLKDSNDAPTVNVLIKFLRANEGNVKLAEGQLTKALKWRKEMNPSALAESTSYSATKFGGLGYLTVYKEANGAENVVTWNIYGGVKDINTTFGDMDEFVKWRVALMELAVKELKMAEATSVIDYDGEDPYQMIQVHDYQNVSFLRLNPAIKAATKKTIEVFTTAYPELLREKFFVNVPAIMGWMFAAMKVFLSKNTTRKFHPISNGANLAREFPSLKDQFPKVYGGSAPALQEGARTVNLSQDESAPAAPEQSKEQTKENKEEAAQEESKPESAPEQPKADPAVTAQEAPAADAK</sequence>
<feature type="chain" id="PRO_0000324983" description="Phosphatidylinositol transfer protein sfh5">
    <location>
        <begin position="1"/>
        <end position="415"/>
    </location>
</feature>
<feature type="domain" description="CRAL-TRIO" evidence="3">
    <location>
        <begin position="177"/>
        <end position="352"/>
    </location>
</feature>
<feature type="region of interest" description="Disordered" evidence="4">
    <location>
        <begin position="1"/>
        <end position="87"/>
    </location>
</feature>
<feature type="region of interest" description="Disordered" evidence="4">
    <location>
        <begin position="358"/>
        <end position="415"/>
    </location>
</feature>
<feature type="compositionally biased region" description="Polar residues" evidence="4">
    <location>
        <begin position="47"/>
        <end position="63"/>
    </location>
</feature>
<feature type="compositionally biased region" description="Low complexity" evidence="4">
    <location>
        <begin position="64"/>
        <end position="75"/>
    </location>
</feature>
<feature type="compositionally biased region" description="Basic and acidic residues" evidence="4">
    <location>
        <begin position="372"/>
        <end position="393"/>
    </location>
</feature>
<feature type="binding site" evidence="1">
    <location>
        <position position="202"/>
    </location>
    <ligand>
        <name>heme</name>
        <dbReference type="ChEBI" id="CHEBI:30413"/>
    </ligand>
</feature>
<feature type="binding site" evidence="1">
    <location>
        <position position="222"/>
    </location>
    <ligand>
        <name>heme</name>
        <dbReference type="ChEBI" id="CHEBI:30413"/>
    </ligand>
</feature>
<feature type="binding site" evidence="1">
    <location>
        <position position="256"/>
    </location>
    <ligand>
        <name>heme</name>
        <dbReference type="ChEBI" id="CHEBI:30413"/>
    </ligand>
</feature>
<feature type="binding site" description="proximal binding residue" evidence="1">
    <location>
        <position position="258"/>
    </location>
    <ligand>
        <name>heme</name>
        <dbReference type="ChEBI" id="CHEBI:30413"/>
    </ligand>
    <ligandPart>
        <name>Fe</name>
        <dbReference type="ChEBI" id="CHEBI:18248"/>
    </ligandPart>
</feature>
<feature type="binding site" evidence="1">
    <location>
        <position position="292"/>
    </location>
    <ligand>
        <name>heme</name>
        <dbReference type="ChEBI" id="CHEBI:30413"/>
    </ligand>
</feature>
<name>SFH5_NEOFI</name>
<reference key="1">
    <citation type="journal article" date="2008" name="PLoS Genet.">
        <title>Genomic islands in the pathogenic filamentous fungus Aspergillus fumigatus.</title>
        <authorList>
            <person name="Fedorova N.D."/>
            <person name="Khaldi N."/>
            <person name="Joardar V.S."/>
            <person name="Maiti R."/>
            <person name="Amedeo P."/>
            <person name="Anderson M.J."/>
            <person name="Crabtree J."/>
            <person name="Silva J.C."/>
            <person name="Badger J.H."/>
            <person name="Albarraq A."/>
            <person name="Angiuoli S."/>
            <person name="Bussey H."/>
            <person name="Bowyer P."/>
            <person name="Cotty P.J."/>
            <person name="Dyer P.S."/>
            <person name="Egan A."/>
            <person name="Galens K."/>
            <person name="Fraser-Liggett C.M."/>
            <person name="Haas B.J."/>
            <person name="Inman J.M."/>
            <person name="Kent R."/>
            <person name="Lemieux S."/>
            <person name="Malavazi I."/>
            <person name="Orvis J."/>
            <person name="Roemer T."/>
            <person name="Ronning C.M."/>
            <person name="Sundaram J.P."/>
            <person name="Sutton G."/>
            <person name="Turner G."/>
            <person name="Venter J.C."/>
            <person name="White O.R."/>
            <person name="Whitty B.R."/>
            <person name="Youngman P."/>
            <person name="Wolfe K.H."/>
            <person name="Goldman G.H."/>
            <person name="Wortman J.R."/>
            <person name="Jiang B."/>
            <person name="Denning D.W."/>
            <person name="Nierman W.C."/>
        </authorList>
    </citation>
    <scope>NUCLEOTIDE SEQUENCE [LARGE SCALE GENOMIC DNA]</scope>
    <source>
        <strain>ATCC 1020 / DSM 3700 / CBS 544.65 / FGSC A1164 / JCM 1740 / NRRL 181 / WB 181</strain>
    </source>
</reference>
<comment type="function">
    <text evidence="2">Non-classical phosphatidylinositol (PtdIns) transfer protein (PITP), which exhibits PtdIns-binding/transfer activity in the absence of detectable PtdCho-binding/transfer activity. Regulates PtdIns(4,5)P2 homeostasis at the plasma membrane. Heme-binding protein that may play a role in organic oxidant-induced stress responses.</text>
</comment>
<comment type="catalytic activity">
    <reaction evidence="2">
        <text>a 1,2-diacyl-sn-glycero-3-phospho-(1D-myo-inositol)(in) = a 1,2-diacyl-sn-glycero-3-phospho-(1D-myo-inositol)(out)</text>
        <dbReference type="Rhea" id="RHEA:38691"/>
        <dbReference type="ChEBI" id="CHEBI:57880"/>
    </reaction>
    <physiologicalReaction direction="left-to-right" evidence="2">
        <dbReference type="Rhea" id="RHEA:38692"/>
    </physiologicalReaction>
</comment>
<comment type="cofactor">
    <cofactor evidence="1">
        <name>heme b</name>
        <dbReference type="ChEBI" id="CHEBI:60344"/>
    </cofactor>
</comment>
<comment type="subcellular location">
    <subcellularLocation>
        <location evidence="2">Cytoplasm</location>
    </subcellularLocation>
    <subcellularLocation>
        <location evidence="2">Endoplasmic reticulum membrane</location>
        <topology evidence="2">Peripheral membrane protein</topology>
    </subcellularLocation>
    <subcellularLocation>
        <location evidence="2">Microsome membrane</location>
        <topology evidence="2">Peripheral membrane protein</topology>
    </subcellularLocation>
</comment>
<comment type="similarity">
    <text evidence="5">Belongs to the SFH5 family.</text>
</comment>